<proteinExistence type="inferred from homology"/>
<evidence type="ECO:0000255" key="1">
    <source>
        <dbReference type="HAMAP-Rule" id="MF_00044"/>
    </source>
</evidence>
<keyword id="KW-0030">Aminoacyl-tRNA synthetase</keyword>
<keyword id="KW-0067">ATP-binding</keyword>
<keyword id="KW-0963">Cytoplasm</keyword>
<keyword id="KW-0436">Ligase</keyword>
<keyword id="KW-0547">Nucleotide-binding</keyword>
<keyword id="KW-0648">Protein biosynthesis</keyword>
<keyword id="KW-1185">Reference proteome</keyword>
<feature type="chain" id="PRO_0000110972" description="Aspartate--tRNA(Asp/Asn) ligase">
    <location>
        <begin position="1"/>
        <end position="592"/>
    </location>
</feature>
<feature type="region of interest" description="Aspartate" evidence="1">
    <location>
        <begin position="206"/>
        <end position="209"/>
    </location>
</feature>
<feature type="binding site" evidence="1">
    <location>
        <position position="182"/>
    </location>
    <ligand>
        <name>L-aspartate</name>
        <dbReference type="ChEBI" id="CHEBI:29991"/>
    </ligand>
</feature>
<feature type="binding site" evidence="1">
    <location>
        <begin position="228"/>
        <end position="230"/>
    </location>
    <ligand>
        <name>ATP</name>
        <dbReference type="ChEBI" id="CHEBI:30616"/>
    </ligand>
</feature>
<feature type="binding site" evidence="1">
    <location>
        <position position="228"/>
    </location>
    <ligand>
        <name>L-aspartate</name>
        <dbReference type="ChEBI" id="CHEBI:29991"/>
    </ligand>
</feature>
<feature type="binding site" evidence="1">
    <location>
        <position position="237"/>
    </location>
    <ligand>
        <name>ATP</name>
        <dbReference type="ChEBI" id="CHEBI:30616"/>
    </ligand>
</feature>
<feature type="binding site" evidence="1">
    <location>
        <position position="455"/>
    </location>
    <ligand>
        <name>L-aspartate</name>
        <dbReference type="ChEBI" id="CHEBI:29991"/>
    </ligand>
</feature>
<feature type="binding site" evidence="1">
    <location>
        <position position="489"/>
    </location>
    <ligand>
        <name>ATP</name>
        <dbReference type="ChEBI" id="CHEBI:30616"/>
    </ligand>
</feature>
<feature type="binding site" evidence="1">
    <location>
        <position position="496"/>
    </location>
    <ligand>
        <name>L-aspartate</name>
        <dbReference type="ChEBI" id="CHEBI:29991"/>
    </ligand>
</feature>
<feature type="binding site" evidence="1">
    <location>
        <begin position="541"/>
        <end position="544"/>
    </location>
    <ligand>
        <name>ATP</name>
        <dbReference type="ChEBI" id="CHEBI:30616"/>
    </ligand>
</feature>
<feature type="site" description="Important for tRNA non-discrimination" evidence="1">
    <location>
        <position position="38"/>
    </location>
</feature>
<protein>
    <recommendedName>
        <fullName evidence="1">Aspartate--tRNA(Asp/Asn) ligase</fullName>
        <ecNumber evidence="1">6.1.1.23</ecNumber>
    </recommendedName>
    <alternativeName>
        <fullName evidence="1">Aspartyl-tRNA synthetase</fullName>
        <shortName evidence="1">AspRS</shortName>
    </alternativeName>
    <alternativeName>
        <fullName evidence="1">Non-discriminating aspartyl-tRNA synthetase</fullName>
        <shortName evidence="1">ND-AspRS</shortName>
    </alternativeName>
</protein>
<accession>Q8RAI7</accession>
<organism>
    <name type="scientific">Caldanaerobacter subterraneus subsp. tengcongensis (strain DSM 15242 / JCM 11007 / NBRC 100824 / MB4)</name>
    <name type="common">Thermoanaerobacter tengcongensis</name>
    <dbReference type="NCBI Taxonomy" id="273068"/>
    <lineage>
        <taxon>Bacteria</taxon>
        <taxon>Bacillati</taxon>
        <taxon>Bacillota</taxon>
        <taxon>Clostridia</taxon>
        <taxon>Thermoanaerobacterales</taxon>
        <taxon>Thermoanaerobacteraceae</taxon>
        <taxon>Caldanaerobacter</taxon>
    </lineage>
</organism>
<dbReference type="EC" id="6.1.1.23" evidence="1"/>
<dbReference type="EMBL" id="AE008691">
    <property type="protein sequence ID" value="AAM24458.1"/>
    <property type="molecule type" value="Genomic_DNA"/>
</dbReference>
<dbReference type="RefSeq" id="WP_011025557.1">
    <property type="nucleotide sequence ID" value="NC_003869.1"/>
</dbReference>
<dbReference type="SMR" id="Q8RAI7"/>
<dbReference type="STRING" id="273068.TTE1231"/>
<dbReference type="KEGG" id="tte:TTE1231"/>
<dbReference type="eggNOG" id="COG0173">
    <property type="taxonomic scope" value="Bacteria"/>
</dbReference>
<dbReference type="HOGENOM" id="CLU_014330_3_2_9"/>
<dbReference type="OrthoDB" id="9802326at2"/>
<dbReference type="Proteomes" id="UP000000555">
    <property type="component" value="Chromosome"/>
</dbReference>
<dbReference type="GO" id="GO:0005737">
    <property type="term" value="C:cytoplasm"/>
    <property type="evidence" value="ECO:0007669"/>
    <property type="project" value="UniProtKB-SubCell"/>
</dbReference>
<dbReference type="GO" id="GO:0004815">
    <property type="term" value="F:aspartate-tRNA ligase activity"/>
    <property type="evidence" value="ECO:0007669"/>
    <property type="project" value="UniProtKB-UniRule"/>
</dbReference>
<dbReference type="GO" id="GO:0050560">
    <property type="term" value="F:aspartate-tRNA(Asn) ligase activity"/>
    <property type="evidence" value="ECO:0007669"/>
    <property type="project" value="UniProtKB-EC"/>
</dbReference>
<dbReference type="GO" id="GO:0005524">
    <property type="term" value="F:ATP binding"/>
    <property type="evidence" value="ECO:0007669"/>
    <property type="project" value="UniProtKB-UniRule"/>
</dbReference>
<dbReference type="GO" id="GO:0140096">
    <property type="term" value="F:catalytic activity, acting on a protein"/>
    <property type="evidence" value="ECO:0007669"/>
    <property type="project" value="UniProtKB-ARBA"/>
</dbReference>
<dbReference type="GO" id="GO:0003676">
    <property type="term" value="F:nucleic acid binding"/>
    <property type="evidence" value="ECO:0007669"/>
    <property type="project" value="InterPro"/>
</dbReference>
<dbReference type="GO" id="GO:0016740">
    <property type="term" value="F:transferase activity"/>
    <property type="evidence" value="ECO:0007669"/>
    <property type="project" value="UniProtKB-ARBA"/>
</dbReference>
<dbReference type="GO" id="GO:0006422">
    <property type="term" value="P:aspartyl-tRNA aminoacylation"/>
    <property type="evidence" value="ECO:0007669"/>
    <property type="project" value="UniProtKB-UniRule"/>
</dbReference>
<dbReference type="CDD" id="cd00777">
    <property type="entry name" value="AspRS_core"/>
    <property type="match status" value="1"/>
</dbReference>
<dbReference type="CDD" id="cd04317">
    <property type="entry name" value="EcAspRS_like_N"/>
    <property type="match status" value="1"/>
</dbReference>
<dbReference type="Gene3D" id="3.30.930.10">
    <property type="entry name" value="Bira Bifunctional Protein, Domain 2"/>
    <property type="match status" value="1"/>
</dbReference>
<dbReference type="Gene3D" id="3.30.1360.30">
    <property type="entry name" value="GAD-like domain"/>
    <property type="match status" value="1"/>
</dbReference>
<dbReference type="Gene3D" id="2.40.50.140">
    <property type="entry name" value="Nucleic acid-binding proteins"/>
    <property type="match status" value="1"/>
</dbReference>
<dbReference type="HAMAP" id="MF_00044">
    <property type="entry name" value="Asp_tRNA_synth_type1"/>
    <property type="match status" value="1"/>
</dbReference>
<dbReference type="InterPro" id="IPR004364">
    <property type="entry name" value="Aa-tRNA-synt_II"/>
</dbReference>
<dbReference type="InterPro" id="IPR006195">
    <property type="entry name" value="aa-tRNA-synth_II"/>
</dbReference>
<dbReference type="InterPro" id="IPR045864">
    <property type="entry name" value="aa-tRNA-synth_II/BPL/LPL"/>
</dbReference>
<dbReference type="InterPro" id="IPR004524">
    <property type="entry name" value="Asp-tRNA-ligase_1"/>
</dbReference>
<dbReference type="InterPro" id="IPR047089">
    <property type="entry name" value="Asp-tRNA-ligase_1_N"/>
</dbReference>
<dbReference type="InterPro" id="IPR002312">
    <property type="entry name" value="Asp/Asn-tRNA-synth_IIb"/>
</dbReference>
<dbReference type="InterPro" id="IPR047090">
    <property type="entry name" value="AspRS_core"/>
</dbReference>
<dbReference type="InterPro" id="IPR004115">
    <property type="entry name" value="GAD-like_sf"/>
</dbReference>
<dbReference type="InterPro" id="IPR029351">
    <property type="entry name" value="GAD_dom"/>
</dbReference>
<dbReference type="InterPro" id="IPR012340">
    <property type="entry name" value="NA-bd_OB-fold"/>
</dbReference>
<dbReference type="InterPro" id="IPR004365">
    <property type="entry name" value="NA-bd_OB_tRNA"/>
</dbReference>
<dbReference type="NCBIfam" id="TIGR00459">
    <property type="entry name" value="aspS_bact"/>
    <property type="match status" value="1"/>
</dbReference>
<dbReference type="NCBIfam" id="NF001750">
    <property type="entry name" value="PRK00476.1"/>
    <property type="match status" value="1"/>
</dbReference>
<dbReference type="PANTHER" id="PTHR22594:SF5">
    <property type="entry name" value="ASPARTATE--TRNA LIGASE, MITOCHONDRIAL"/>
    <property type="match status" value="1"/>
</dbReference>
<dbReference type="PANTHER" id="PTHR22594">
    <property type="entry name" value="ASPARTYL/LYSYL-TRNA SYNTHETASE"/>
    <property type="match status" value="1"/>
</dbReference>
<dbReference type="Pfam" id="PF02938">
    <property type="entry name" value="GAD"/>
    <property type="match status" value="1"/>
</dbReference>
<dbReference type="Pfam" id="PF00152">
    <property type="entry name" value="tRNA-synt_2"/>
    <property type="match status" value="1"/>
</dbReference>
<dbReference type="Pfam" id="PF01336">
    <property type="entry name" value="tRNA_anti-codon"/>
    <property type="match status" value="1"/>
</dbReference>
<dbReference type="PRINTS" id="PR01042">
    <property type="entry name" value="TRNASYNTHASP"/>
</dbReference>
<dbReference type="SUPFAM" id="SSF55681">
    <property type="entry name" value="Class II aaRS and biotin synthetases"/>
    <property type="match status" value="1"/>
</dbReference>
<dbReference type="SUPFAM" id="SSF55261">
    <property type="entry name" value="GAD domain-like"/>
    <property type="match status" value="1"/>
</dbReference>
<dbReference type="SUPFAM" id="SSF50249">
    <property type="entry name" value="Nucleic acid-binding proteins"/>
    <property type="match status" value="1"/>
</dbReference>
<dbReference type="PROSITE" id="PS50862">
    <property type="entry name" value="AA_TRNA_LIGASE_II"/>
    <property type="match status" value="1"/>
</dbReference>
<comment type="function">
    <text evidence="1">Aspartyl-tRNA synthetase with relaxed tRNA specificity since it is able to aspartylate not only its cognate tRNA(Asp) but also tRNA(Asn). Reaction proceeds in two steps: L-aspartate is first activated by ATP to form Asp-AMP and then transferred to the acceptor end of tRNA(Asp/Asn).</text>
</comment>
<comment type="catalytic activity">
    <reaction evidence="1">
        <text>tRNA(Asx) + L-aspartate + ATP = L-aspartyl-tRNA(Asx) + AMP + diphosphate</text>
        <dbReference type="Rhea" id="RHEA:18349"/>
        <dbReference type="Rhea" id="RHEA-COMP:9710"/>
        <dbReference type="Rhea" id="RHEA-COMP:9711"/>
        <dbReference type="ChEBI" id="CHEBI:29991"/>
        <dbReference type="ChEBI" id="CHEBI:30616"/>
        <dbReference type="ChEBI" id="CHEBI:33019"/>
        <dbReference type="ChEBI" id="CHEBI:78442"/>
        <dbReference type="ChEBI" id="CHEBI:78516"/>
        <dbReference type="ChEBI" id="CHEBI:456215"/>
        <dbReference type="EC" id="6.1.1.23"/>
    </reaction>
</comment>
<comment type="subunit">
    <text evidence="1">Homodimer.</text>
</comment>
<comment type="subcellular location">
    <subcellularLocation>
        <location evidence="1">Cytoplasm</location>
    </subcellularLocation>
</comment>
<comment type="similarity">
    <text evidence="1">Belongs to the class-II aminoacyl-tRNA synthetase family. Type 1 subfamily.</text>
</comment>
<gene>
    <name evidence="1" type="primary">aspS</name>
    <name type="ordered locus">TTE1231</name>
</gene>
<sequence>MGEQLGGLKRTHMCGELGVKDVGKSVVVMGWVNSRRDHGGLVFIDLRDRTGIVQIVFSEQVSKEVFEKVQSVRSEYVLAVEGEVVKRLPENVNPKIPTGEIEIYAKNLKILSKSETPPFPIEDRSNVSEAVRLKYRYLDLRRPSMQRNLITRFKLTQAVREFLNDNGFIEIETPMLIKSTPEGARDYLVPSRIYPGKFYALPQSPQIFKQLLMIAGFDRYYQIARCLRDEDLRADRQPEFTQIDIEMSFVEVEDVLDINERMIKHVFKKVLDVDLDIPFRRLTYQEAMERFGTDKPDLRFGMELKDLSDILRESEFNVFKNALKNGGSIRGINVKGAASMTRKQLDELVEFAKNFGAKGLLWMQVLEGEVKSPATKFLTEGELNKILERLEAEVGDLLLIVADKDEVVFDTLGHLRVEMAKRFNLIDESKYEFVWVVDFPLLEYDEEEKRYVAKHHPFTSPKDEDIDLLEKEPLKVRAKAYDIVLNGTEIGGGSIRIHDTELQKRMFKVLGFSEEEAWKKFGFLMEAFKYGAPPHGGIAYGLDRLAMIMTGSDTIRDVIAFPKTQNAVCLMSDAPSEVSEKQLKELHIKIDL</sequence>
<name>SYDND_CALS4</name>
<reference key="1">
    <citation type="journal article" date="2002" name="Genome Res.">
        <title>A complete sequence of the T. tengcongensis genome.</title>
        <authorList>
            <person name="Bao Q."/>
            <person name="Tian Y."/>
            <person name="Li W."/>
            <person name="Xu Z."/>
            <person name="Xuan Z."/>
            <person name="Hu S."/>
            <person name="Dong W."/>
            <person name="Yang J."/>
            <person name="Chen Y."/>
            <person name="Xue Y."/>
            <person name="Xu Y."/>
            <person name="Lai X."/>
            <person name="Huang L."/>
            <person name="Dong X."/>
            <person name="Ma Y."/>
            <person name="Ling L."/>
            <person name="Tan H."/>
            <person name="Chen R."/>
            <person name="Wang J."/>
            <person name="Yu J."/>
            <person name="Yang H."/>
        </authorList>
    </citation>
    <scope>NUCLEOTIDE SEQUENCE [LARGE SCALE GENOMIC DNA]</scope>
    <source>
        <strain>DSM 15242 / JCM 11007 / NBRC 100824 / MB4</strain>
    </source>
</reference>